<proteinExistence type="inferred from homology"/>
<reference key="1">
    <citation type="journal article" date="2004" name="Science">
        <title>Illuminating the evolutionary history of chlamydiae.</title>
        <authorList>
            <person name="Horn M."/>
            <person name="Collingro A."/>
            <person name="Schmitz-Esser S."/>
            <person name="Beier C.L."/>
            <person name="Purkhold U."/>
            <person name="Fartmann B."/>
            <person name="Brandt P."/>
            <person name="Nyakatura G.J."/>
            <person name="Droege M."/>
            <person name="Frishman D."/>
            <person name="Rattei T."/>
            <person name="Mewes H.-W."/>
            <person name="Wagner M."/>
        </authorList>
    </citation>
    <scope>NUCLEOTIDE SEQUENCE [LARGE SCALE GENOMIC DNA]</scope>
    <source>
        <strain>UWE25</strain>
    </source>
</reference>
<keyword id="KW-1185">Reference proteome</keyword>
<keyword id="KW-0687">Ribonucleoprotein</keyword>
<keyword id="KW-0689">Ribosomal protein</keyword>
<protein>
    <recommendedName>
        <fullName evidence="1">Large ribosomal subunit protein bL19</fullName>
    </recommendedName>
    <alternativeName>
        <fullName evidence="2">50S ribosomal protein L19</fullName>
    </alternativeName>
</protein>
<comment type="function">
    <text evidence="1">This protein is located at the 30S-50S ribosomal subunit interface and may play a role in the structure and function of the aminoacyl-tRNA binding site.</text>
</comment>
<comment type="similarity">
    <text evidence="1">Belongs to the bacterial ribosomal protein bL19 family.</text>
</comment>
<accession>Q6MDG8</accession>
<evidence type="ECO:0000255" key="1">
    <source>
        <dbReference type="HAMAP-Rule" id="MF_00402"/>
    </source>
</evidence>
<evidence type="ECO:0000305" key="2"/>
<gene>
    <name evidence="1" type="primary">rplS</name>
    <name type="ordered locus">pc0657</name>
</gene>
<sequence>MIMSRSAIIEKLQNEQMKKDITPFRIGDTVRVHIRIIEGDKERTQVFAGTVIARKGQGLSETFSVHRVAYGEGMERVFMLHSPRIAKIEVIKEGDVRRSKLYYLRGTSGKASKVKARLGARRSSNAVTKQIVSAE</sequence>
<feature type="chain" id="PRO_0000163501" description="Large ribosomal subunit protein bL19">
    <location>
        <begin position="1"/>
        <end position="135"/>
    </location>
</feature>
<organism>
    <name type="scientific">Protochlamydia amoebophila (strain UWE25)</name>
    <dbReference type="NCBI Taxonomy" id="264201"/>
    <lineage>
        <taxon>Bacteria</taxon>
        <taxon>Pseudomonadati</taxon>
        <taxon>Chlamydiota</taxon>
        <taxon>Chlamydiia</taxon>
        <taxon>Parachlamydiales</taxon>
        <taxon>Parachlamydiaceae</taxon>
        <taxon>Candidatus Protochlamydia</taxon>
    </lineage>
</organism>
<dbReference type="EMBL" id="BX908798">
    <property type="protein sequence ID" value="CAF23381.1"/>
    <property type="molecule type" value="Genomic_DNA"/>
</dbReference>
<dbReference type="SMR" id="Q6MDG8"/>
<dbReference type="STRING" id="264201.pc0657"/>
<dbReference type="eggNOG" id="COG0335">
    <property type="taxonomic scope" value="Bacteria"/>
</dbReference>
<dbReference type="HOGENOM" id="CLU_103507_0_2_0"/>
<dbReference type="Proteomes" id="UP000000529">
    <property type="component" value="Chromosome"/>
</dbReference>
<dbReference type="GO" id="GO:0022625">
    <property type="term" value="C:cytosolic large ribosomal subunit"/>
    <property type="evidence" value="ECO:0007669"/>
    <property type="project" value="TreeGrafter"/>
</dbReference>
<dbReference type="GO" id="GO:0003735">
    <property type="term" value="F:structural constituent of ribosome"/>
    <property type="evidence" value="ECO:0007669"/>
    <property type="project" value="InterPro"/>
</dbReference>
<dbReference type="GO" id="GO:0006412">
    <property type="term" value="P:translation"/>
    <property type="evidence" value="ECO:0007669"/>
    <property type="project" value="UniProtKB-UniRule"/>
</dbReference>
<dbReference type="Gene3D" id="2.30.30.790">
    <property type="match status" value="1"/>
</dbReference>
<dbReference type="HAMAP" id="MF_00402">
    <property type="entry name" value="Ribosomal_bL19"/>
    <property type="match status" value="1"/>
</dbReference>
<dbReference type="InterPro" id="IPR001857">
    <property type="entry name" value="Ribosomal_bL19"/>
</dbReference>
<dbReference type="InterPro" id="IPR018257">
    <property type="entry name" value="Ribosomal_bL19_CS"/>
</dbReference>
<dbReference type="InterPro" id="IPR038657">
    <property type="entry name" value="Ribosomal_bL19_sf"/>
</dbReference>
<dbReference type="InterPro" id="IPR008991">
    <property type="entry name" value="Translation_prot_SH3-like_sf"/>
</dbReference>
<dbReference type="NCBIfam" id="TIGR01024">
    <property type="entry name" value="rplS_bact"/>
    <property type="match status" value="1"/>
</dbReference>
<dbReference type="PANTHER" id="PTHR15680:SF9">
    <property type="entry name" value="LARGE RIBOSOMAL SUBUNIT PROTEIN BL19M"/>
    <property type="match status" value="1"/>
</dbReference>
<dbReference type="PANTHER" id="PTHR15680">
    <property type="entry name" value="RIBOSOMAL PROTEIN L19"/>
    <property type="match status" value="1"/>
</dbReference>
<dbReference type="Pfam" id="PF01245">
    <property type="entry name" value="Ribosomal_L19"/>
    <property type="match status" value="1"/>
</dbReference>
<dbReference type="PIRSF" id="PIRSF002191">
    <property type="entry name" value="Ribosomal_L19"/>
    <property type="match status" value="1"/>
</dbReference>
<dbReference type="PRINTS" id="PR00061">
    <property type="entry name" value="RIBOSOMALL19"/>
</dbReference>
<dbReference type="SUPFAM" id="SSF50104">
    <property type="entry name" value="Translation proteins SH3-like domain"/>
    <property type="match status" value="1"/>
</dbReference>
<dbReference type="PROSITE" id="PS01015">
    <property type="entry name" value="RIBOSOMAL_L19"/>
    <property type="match status" value="1"/>
</dbReference>
<name>RL19_PARUW</name>